<evidence type="ECO:0000250" key="1"/>
<evidence type="ECO:0000255" key="2">
    <source>
        <dbReference type="PROSITE-ProRule" id="PRU10095"/>
    </source>
</evidence>
<evidence type="ECO:0000305" key="3"/>
<accession>C8ZFP7</accession>
<dbReference type="EC" id="3.4.24.-"/>
<dbReference type="EMBL" id="FN393083">
    <property type="protein sequence ID" value="CAY82213.1"/>
    <property type="status" value="ALT_INIT"/>
    <property type="molecule type" value="Genomic_DNA"/>
</dbReference>
<dbReference type="MEROPS" id="M76.002"/>
<dbReference type="HOGENOM" id="CLU_079125_0_0_1"/>
<dbReference type="OrthoDB" id="10360at4893"/>
<dbReference type="Proteomes" id="UP000000286">
    <property type="component" value="Chromosome XIV, Scaffold EC1118_1N18"/>
</dbReference>
<dbReference type="GO" id="GO:0005743">
    <property type="term" value="C:mitochondrial inner membrane"/>
    <property type="evidence" value="ECO:0007669"/>
    <property type="project" value="UniProtKB-SubCell"/>
</dbReference>
<dbReference type="GO" id="GO:0046872">
    <property type="term" value="F:metal ion binding"/>
    <property type="evidence" value="ECO:0007669"/>
    <property type="project" value="UniProtKB-KW"/>
</dbReference>
<dbReference type="GO" id="GO:0004222">
    <property type="term" value="F:metalloendopeptidase activity"/>
    <property type="evidence" value="ECO:0007669"/>
    <property type="project" value="InterPro"/>
</dbReference>
<dbReference type="GO" id="GO:0034982">
    <property type="term" value="P:mitochondrial protein processing"/>
    <property type="evidence" value="ECO:0007669"/>
    <property type="project" value="TreeGrafter"/>
</dbReference>
<dbReference type="GO" id="GO:0033615">
    <property type="term" value="P:mitochondrial proton-transporting ATP synthase complex assembly"/>
    <property type="evidence" value="ECO:0007669"/>
    <property type="project" value="TreeGrafter"/>
</dbReference>
<dbReference type="InterPro" id="IPR019165">
    <property type="entry name" value="Peptidase_M76_ATP23"/>
</dbReference>
<dbReference type="PANTHER" id="PTHR21711">
    <property type="entry name" value="MITOCHONDRIAL INNER MEMBRANE PROTEASE"/>
    <property type="match status" value="1"/>
</dbReference>
<dbReference type="PANTHER" id="PTHR21711:SF0">
    <property type="entry name" value="MITOCHONDRIAL INNER MEMBRANE PROTEASE ATP23 HOMOLOG"/>
    <property type="match status" value="1"/>
</dbReference>
<dbReference type="Pfam" id="PF09768">
    <property type="entry name" value="Peptidase_M76"/>
    <property type="match status" value="1"/>
</dbReference>
<dbReference type="PROSITE" id="PS00142">
    <property type="entry name" value="ZINC_PROTEASE"/>
    <property type="match status" value="1"/>
</dbReference>
<protein>
    <recommendedName>
        <fullName>Mitochondrial inner membrane protease ATP23</fullName>
        <ecNumber>3.4.24.-</ecNumber>
    </recommendedName>
</protein>
<feature type="chain" id="PRO_0000392082" description="Mitochondrial inner membrane protease ATP23">
    <location>
        <begin position="1"/>
        <end position="227"/>
    </location>
</feature>
<feature type="active site" evidence="2">
    <location>
        <position position="125"/>
    </location>
</feature>
<feature type="binding site" evidence="1">
    <location>
        <position position="124"/>
    </location>
    <ligand>
        <name>a divalent metal cation</name>
        <dbReference type="ChEBI" id="CHEBI:60240"/>
        <note>catalytic</note>
    </ligand>
</feature>
<feature type="binding site" evidence="1">
    <location>
        <position position="128"/>
    </location>
    <ligand>
        <name>a divalent metal cation</name>
        <dbReference type="ChEBI" id="CHEBI:60240"/>
        <note>catalytic</note>
    </ligand>
</feature>
<name>ATP23_YEAS8</name>
<gene>
    <name type="primary">ATP23</name>
    <name type="ORF">EC1118_1N18_0606g</name>
</gene>
<keyword id="KW-0378">Hydrolase</keyword>
<keyword id="KW-0472">Membrane</keyword>
<keyword id="KW-0479">Metal-binding</keyword>
<keyword id="KW-0482">Metalloprotease</keyword>
<keyword id="KW-0496">Mitochondrion</keyword>
<keyword id="KW-0999">Mitochondrion inner membrane</keyword>
<keyword id="KW-0645">Protease</keyword>
<comment type="function">
    <text evidence="1">Has a dual role in the assembly of mitochondrial ATPase. Acts as a protease that removes the N-terminal 10 residues of mitochondrial ATPase CF(0) subunit 6 (ATP6) at the intermembrane space side. Also involved in the correct assembly of the membrane-embedded ATPase CF(0) particle, probably mediating association of ATP6 with the subunit 9 ring (By similarity).</text>
</comment>
<comment type="subunit">
    <text evidence="1">Interacts with ATP6.</text>
</comment>
<comment type="subcellular location">
    <subcellularLocation>
        <location>Mitochondrion inner membrane</location>
        <topology>Peripheral membrane protein</topology>
        <orientation>Intermembrane side</orientation>
    </subcellularLocation>
    <text evidence="1">Associates loosely with the inner membrane.</text>
</comment>
<comment type="similarity">
    <text evidence="3">Belongs to the peptidase M76 family.</text>
</comment>
<comment type="sequence caution" evidence="3">
    <conflict type="erroneous initiation">
        <sequence resource="EMBL-CDS" id="CAY82213"/>
    </conflict>
</comment>
<proteinExistence type="inferred from homology"/>
<sequence>MNSSGDNAGFEWWRRTMQYKTGIGLTPEEKTRYEDDSKARELKKECLKCYEYRDWMLKYSPTVRFMVQAITKLNKGSDSKFDDSKIICDYCPDWKSGGFHPELGILLCQNRLRDKWHLEDTLSHELIHYFDDLKWQIDWLNLKHHACSEIRASSLSGECRFWEEFKRRGFRTGFHVARGHQDCVRRRAIISVSGNPNCQSKEHAAKIVDEVWDSCFADTRPFDEIYR</sequence>
<organism>
    <name type="scientific">Saccharomyces cerevisiae (strain Lalvin EC1118 / Prise de mousse)</name>
    <name type="common">Baker's yeast</name>
    <dbReference type="NCBI Taxonomy" id="643680"/>
    <lineage>
        <taxon>Eukaryota</taxon>
        <taxon>Fungi</taxon>
        <taxon>Dikarya</taxon>
        <taxon>Ascomycota</taxon>
        <taxon>Saccharomycotina</taxon>
        <taxon>Saccharomycetes</taxon>
        <taxon>Saccharomycetales</taxon>
        <taxon>Saccharomycetaceae</taxon>
        <taxon>Saccharomyces</taxon>
    </lineage>
</organism>
<reference key="1">
    <citation type="journal article" date="2009" name="Proc. Natl. Acad. Sci. U.S.A.">
        <title>Eukaryote-to-eukaryote gene transfer events revealed by the genome sequence of the wine yeast Saccharomyces cerevisiae EC1118.</title>
        <authorList>
            <person name="Novo M."/>
            <person name="Bigey F."/>
            <person name="Beyne E."/>
            <person name="Galeote V."/>
            <person name="Gavory F."/>
            <person name="Mallet S."/>
            <person name="Cambon B."/>
            <person name="Legras J.-L."/>
            <person name="Wincker P."/>
            <person name="Casaregola S."/>
            <person name="Dequin S."/>
        </authorList>
    </citation>
    <scope>NUCLEOTIDE SEQUENCE [LARGE SCALE GENOMIC DNA]</scope>
    <source>
        <strain>Lalvin EC1118 / Prise de mousse</strain>
    </source>
</reference>